<sequence>MLCGGTSQPVDADEQIQKICDSMKPHAEAQAGKTFDVFVAKTYTTQCVPGTNYFIKVHVGGDEHVHLRVYKKLPCNGETLELSKMLQDKRHHDPLEYF</sequence>
<feature type="chain" id="PRO_0000434649" description="Cystatin-B">
    <location>
        <begin position="1"/>
        <end position="98"/>
    </location>
</feature>
<feature type="domain" description="Cystatin" evidence="2">
    <location>
        <begin position="4"/>
        <end position="83"/>
    </location>
</feature>
<feature type="short sequence motif" description="Secondary area of contact" evidence="1">
    <location>
        <begin position="46"/>
        <end position="50"/>
    </location>
</feature>
<feature type="site" description="Reactive site" evidence="1">
    <location>
        <position position="4"/>
    </location>
</feature>
<protein>
    <recommendedName>
        <fullName evidence="1 6">Cystatin-B</fullName>
    </recommendedName>
    <alternativeName>
        <fullName evidence="1 4">PoCystatin-B</fullName>
    </alternativeName>
    <alternativeName>
        <fullName evidence="1 4">Stefin-B</fullName>
    </alternativeName>
</protein>
<dbReference type="EMBL" id="EU597232">
    <property type="protein sequence ID" value="ACC86114.1"/>
    <property type="molecule type" value="mRNA"/>
</dbReference>
<dbReference type="SMR" id="B2Z449"/>
<dbReference type="GO" id="GO:0005737">
    <property type="term" value="C:cytoplasm"/>
    <property type="evidence" value="ECO:0000250"/>
    <property type="project" value="UniProtKB"/>
</dbReference>
<dbReference type="GO" id="GO:0005829">
    <property type="term" value="C:cytosol"/>
    <property type="evidence" value="ECO:0007669"/>
    <property type="project" value="TreeGrafter"/>
</dbReference>
<dbReference type="GO" id="GO:0004869">
    <property type="term" value="F:cysteine-type endopeptidase inhibitor activity"/>
    <property type="evidence" value="ECO:0000314"/>
    <property type="project" value="UniProtKB"/>
</dbReference>
<dbReference type="GO" id="GO:0071220">
    <property type="term" value="P:cellular response to bacterial lipoprotein"/>
    <property type="evidence" value="ECO:0000353"/>
    <property type="project" value="UniProtKB"/>
</dbReference>
<dbReference type="GO" id="GO:0045087">
    <property type="term" value="P:innate immune response"/>
    <property type="evidence" value="ECO:0007669"/>
    <property type="project" value="UniProtKB-KW"/>
</dbReference>
<dbReference type="FunFam" id="3.10.450.10:FF:000001">
    <property type="entry name" value="Cystatin-A"/>
    <property type="match status" value="1"/>
</dbReference>
<dbReference type="Gene3D" id="3.10.450.10">
    <property type="match status" value="1"/>
</dbReference>
<dbReference type="InterPro" id="IPR000010">
    <property type="entry name" value="Cystatin_dom"/>
</dbReference>
<dbReference type="InterPro" id="IPR046350">
    <property type="entry name" value="Cystatin_sf"/>
</dbReference>
<dbReference type="InterPro" id="IPR001713">
    <property type="entry name" value="Prot_inh_stefin"/>
</dbReference>
<dbReference type="PANTHER" id="PTHR11414:SF21">
    <property type="entry name" value="CYSTATIN 14A, TANDEM DUPLICATE 1-RELATED"/>
    <property type="match status" value="1"/>
</dbReference>
<dbReference type="PANTHER" id="PTHR11414">
    <property type="entry name" value="CYSTATIN FAMILY MEMBER"/>
    <property type="match status" value="1"/>
</dbReference>
<dbReference type="Pfam" id="PF00031">
    <property type="entry name" value="Cystatin"/>
    <property type="match status" value="1"/>
</dbReference>
<dbReference type="PRINTS" id="PR00295">
    <property type="entry name" value="STEFINA"/>
</dbReference>
<dbReference type="SMART" id="SM00043">
    <property type="entry name" value="CY"/>
    <property type="match status" value="1"/>
</dbReference>
<dbReference type="SUPFAM" id="SSF54403">
    <property type="entry name" value="Cystatin/monellin"/>
    <property type="match status" value="1"/>
</dbReference>
<reference key="1">
    <citation type="journal article" date="2013" name="Comp. Biochem. Physiol.">
        <title>Olive flounder (Paralichthys olivaceus) cystatin B: Cloning, tissue distribution, expression and inhibitory profile of piscine cystatin B.</title>
        <authorList>
            <person name="Ahn S.J."/>
            <person name="Bak H.J."/>
            <person name="Park J.H."/>
            <person name="Kim S.A."/>
            <person name="Kim N.Y."/>
            <person name="Lee J.Y."/>
            <person name="Sung J.H."/>
            <person name="Jeon S.J."/>
            <person name="Chung J.K."/>
            <person name="Lee H.H."/>
        </authorList>
    </citation>
    <scope>NUCLEOTIDE SEQUENCE [MRNA]</scope>
    <scope>FUNCTION</scope>
    <scope>ACTIVITY REGULATION</scope>
    <scope>BIOPHYSICOCHEMICAL PROPERTIES</scope>
    <scope>TISSUE SPECIFICITY</scope>
    <scope>INDUCTION</scope>
    <scope>PHYLOGENETIC ANALYSIS</scope>
</reference>
<comment type="function">
    <text evidence="3">Thiol protease inhibitor. Has high papain, bovine cathepsin B and fish cathepsins F and X inhibitory activity and inhibits fish cathepsins L, S and K to a lesser extent in vitro. May be involved in innate immunity.</text>
</comment>
<comment type="activity regulation">
    <text evidence="3">Greatly decreased inhibitory activity against papain protease by metal ions including ZnSO(4), CuSO(4), HgCl(2) and CoCl(2). Decreased inhibitory activity against papain protease by detergents including Tween 20, SDS and Brij 35.</text>
</comment>
<comment type="biophysicochemical properties">
    <phDependence>
        <text evidence="3">Optimum pH is 6-7.5 and pH 6.5-8 for papain and bovine cathepsin B, respectively.</text>
    </phDependence>
    <temperatureDependence>
        <text evidence="3">Stable between 20 and 40 degrees Celsius. Activity for papain drops rapidly over 60 degrees Celsius. Retains inhibitory activity against papain for 10 days at 37 and 30 degrees Celsius.</text>
    </temperatureDependence>
</comment>
<comment type="subcellular location">
    <subcellularLocation>
        <location evidence="1">Cytoplasm</location>
    </subcellularLocation>
</comment>
<comment type="tissue specificity">
    <text evidence="3">Ubiquitously expressed in normal and lipopolysaccharide (LPS)-stimulated tissues including brain, eye, gullet, heart, liver, muscle, stomach, kidney, spleen, pyloric ceca, intestine and gill.</text>
</comment>
<comment type="induction">
    <text evidence="3">By LPS. Slightly increased expression 24 hours post-injection in spleen and muscle.</text>
</comment>
<comment type="similarity">
    <text evidence="5">Belongs to the cystatin family.</text>
</comment>
<evidence type="ECO:0000250" key="1">
    <source>
        <dbReference type="UniProtKB" id="P04080"/>
    </source>
</evidence>
<evidence type="ECO:0000255" key="2"/>
<evidence type="ECO:0000269" key="3">
    <source>
    </source>
</evidence>
<evidence type="ECO:0000303" key="4">
    <source>
    </source>
</evidence>
<evidence type="ECO:0000305" key="5"/>
<evidence type="ECO:0000312" key="6">
    <source>
        <dbReference type="EMBL" id="ACC86114.1"/>
    </source>
</evidence>
<keyword id="KW-0963">Cytoplasm</keyword>
<keyword id="KW-0391">Immunity</keyword>
<keyword id="KW-0399">Innate immunity</keyword>
<keyword id="KW-0646">Protease inhibitor</keyword>
<keyword id="KW-0789">Thiol protease inhibitor</keyword>
<proteinExistence type="evidence at protein level"/>
<organism>
    <name type="scientific">Paralichthys olivaceus</name>
    <name type="common">Bastard halibut</name>
    <name type="synonym">Hippoglossus olivaceus</name>
    <dbReference type="NCBI Taxonomy" id="8255"/>
    <lineage>
        <taxon>Eukaryota</taxon>
        <taxon>Metazoa</taxon>
        <taxon>Chordata</taxon>
        <taxon>Craniata</taxon>
        <taxon>Vertebrata</taxon>
        <taxon>Euteleostomi</taxon>
        <taxon>Actinopterygii</taxon>
        <taxon>Neopterygii</taxon>
        <taxon>Teleostei</taxon>
        <taxon>Neoteleostei</taxon>
        <taxon>Acanthomorphata</taxon>
        <taxon>Carangaria</taxon>
        <taxon>Pleuronectiformes</taxon>
        <taxon>Pleuronectoidei</taxon>
        <taxon>Paralichthyidae</taxon>
        <taxon>Paralichthys</taxon>
    </lineage>
</organism>
<accession>B2Z449</accession>
<name>CYTB_PAROL</name>